<protein>
    <recommendedName>
        <fullName evidence="1">Phosphopantetheine adenylyltransferase</fullName>
        <ecNumber evidence="1">2.7.7.3</ecNumber>
    </recommendedName>
    <alternativeName>
        <fullName evidence="1">Dephospho-CoA pyrophosphorylase</fullName>
    </alternativeName>
    <alternativeName>
        <fullName evidence="1">Pantetheine-phosphate adenylyltransferase</fullName>
        <shortName evidence="1">PPAT</shortName>
    </alternativeName>
</protein>
<keyword id="KW-0067">ATP-binding</keyword>
<keyword id="KW-0173">Coenzyme A biosynthesis</keyword>
<keyword id="KW-0963">Cytoplasm</keyword>
<keyword id="KW-0460">Magnesium</keyword>
<keyword id="KW-0547">Nucleotide-binding</keyword>
<keyword id="KW-0548">Nucleotidyltransferase</keyword>
<keyword id="KW-1185">Reference proteome</keyword>
<keyword id="KW-0808">Transferase</keyword>
<proteinExistence type="inferred from homology"/>
<name>COAD_CERS4</name>
<organism>
    <name type="scientific">Cereibacter sphaeroides (strain ATCC 17023 / DSM 158 / JCM 6121 / CCUG 31486 / LMG 2827 / NBRC 12203 / NCIMB 8253 / ATH 2.4.1.)</name>
    <name type="common">Rhodobacter sphaeroides</name>
    <dbReference type="NCBI Taxonomy" id="272943"/>
    <lineage>
        <taxon>Bacteria</taxon>
        <taxon>Pseudomonadati</taxon>
        <taxon>Pseudomonadota</taxon>
        <taxon>Alphaproteobacteria</taxon>
        <taxon>Rhodobacterales</taxon>
        <taxon>Paracoccaceae</taxon>
        <taxon>Cereibacter</taxon>
    </lineage>
</organism>
<comment type="function">
    <text evidence="1">Reversibly transfers an adenylyl group from ATP to 4'-phosphopantetheine, yielding dephospho-CoA (dPCoA) and pyrophosphate.</text>
</comment>
<comment type="catalytic activity">
    <reaction evidence="1">
        <text>(R)-4'-phosphopantetheine + ATP + H(+) = 3'-dephospho-CoA + diphosphate</text>
        <dbReference type="Rhea" id="RHEA:19801"/>
        <dbReference type="ChEBI" id="CHEBI:15378"/>
        <dbReference type="ChEBI" id="CHEBI:30616"/>
        <dbReference type="ChEBI" id="CHEBI:33019"/>
        <dbReference type="ChEBI" id="CHEBI:57328"/>
        <dbReference type="ChEBI" id="CHEBI:61723"/>
        <dbReference type="EC" id="2.7.7.3"/>
    </reaction>
</comment>
<comment type="cofactor">
    <cofactor evidence="1">
        <name>Mg(2+)</name>
        <dbReference type="ChEBI" id="CHEBI:18420"/>
    </cofactor>
</comment>
<comment type="pathway">
    <text evidence="1">Cofactor biosynthesis; coenzyme A biosynthesis; CoA from (R)-pantothenate: step 4/5.</text>
</comment>
<comment type="subunit">
    <text evidence="1">Homohexamer.</text>
</comment>
<comment type="subcellular location">
    <subcellularLocation>
        <location evidence="1">Cytoplasm</location>
    </subcellularLocation>
</comment>
<comment type="similarity">
    <text evidence="1">Belongs to the bacterial CoaD family.</text>
</comment>
<reference key="1">
    <citation type="submission" date="2005-09" db="EMBL/GenBank/DDBJ databases">
        <title>Complete sequence of chromosome 1 of Rhodobacter sphaeroides 2.4.1.</title>
        <authorList>
            <person name="Copeland A."/>
            <person name="Lucas S."/>
            <person name="Lapidus A."/>
            <person name="Barry K."/>
            <person name="Detter J.C."/>
            <person name="Glavina T."/>
            <person name="Hammon N."/>
            <person name="Israni S."/>
            <person name="Pitluck S."/>
            <person name="Richardson P."/>
            <person name="Mackenzie C."/>
            <person name="Choudhary M."/>
            <person name="Larimer F."/>
            <person name="Hauser L.J."/>
            <person name="Land M."/>
            <person name="Donohue T.J."/>
            <person name="Kaplan S."/>
        </authorList>
    </citation>
    <scope>NUCLEOTIDE SEQUENCE [LARGE SCALE GENOMIC DNA]</scope>
    <source>
        <strain>ATCC 17023 / DSM 158 / JCM 6121 / CCUG 31486 / LMG 2827 / NBRC 12203 / NCIMB 8253 / ATH 2.4.1.</strain>
    </source>
</reference>
<sequence>MRIGLYPGTFDPLTLGHLDIIQRAMALVDRLVIGVAINRDKGPLFSLEERVRMVETECRAIAANGGEIVVHPFENLLIDCARDVGASVIVRGLRAVADFEYEFQMVGMNRALDAGIETVFLMADARRQAIASKLVKEIARLGGDVSSFVTPDVGAALVAKYR</sequence>
<accession>Q3J263</accession>
<dbReference type="EC" id="2.7.7.3" evidence="1"/>
<dbReference type="EMBL" id="CP000143">
    <property type="protein sequence ID" value="ABA79121.1"/>
    <property type="molecule type" value="Genomic_DNA"/>
</dbReference>
<dbReference type="RefSeq" id="WP_002720119.1">
    <property type="nucleotide sequence ID" value="NZ_CP030271.1"/>
</dbReference>
<dbReference type="RefSeq" id="YP_353022.1">
    <property type="nucleotide sequence ID" value="NC_007493.2"/>
</dbReference>
<dbReference type="SMR" id="Q3J263"/>
<dbReference type="STRING" id="272943.RSP_2960"/>
<dbReference type="EnsemblBacteria" id="ABA79121">
    <property type="protein sequence ID" value="ABA79121"/>
    <property type="gene ID" value="RSP_2960"/>
</dbReference>
<dbReference type="GeneID" id="67446701"/>
<dbReference type="KEGG" id="rsp:RSP_2960"/>
<dbReference type="PATRIC" id="fig|272943.9.peg.1900"/>
<dbReference type="eggNOG" id="COG0669">
    <property type="taxonomic scope" value="Bacteria"/>
</dbReference>
<dbReference type="OrthoDB" id="9806661at2"/>
<dbReference type="PhylomeDB" id="Q3J263"/>
<dbReference type="UniPathway" id="UPA00241">
    <property type="reaction ID" value="UER00355"/>
</dbReference>
<dbReference type="Proteomes" id="UP000002703">
    <property type="component" value="Chromosome 1"/>
</dbReference>
<dbReference type="GO" id="GO:0005737">
    <property type="term" value="C:cytoplasm"/>
    <property type="evidence" value="ECO:0007669"/>
    <property type="project" value="UniProtKB-SubCell"/>
</dbReference>
<dbReference type="GO" id="GO:0005524">
    <property type="term" value="F:ATP binding"/>
    <property type="evidence" value="ECO:0007669"/>
    <property type="project" value="UniProtKB-KW"/>
</dbReference>
<dbReference type="GO" id="GO:0004595">
    <property type="term" value="F:pantetheine-phosphate adenylyltransferase activity"/>
    <property type="evidence" value="ECO:0007669"/>
    <property type="project" value="UniProtKB-UniRule"/>
</dbReference>
<dbReference type="GO" id="GO:0015937">
    <property type="term" value="P:coenzyme A biosynthetic process"/>
    <property type="evidence" value="ECO:0007669"/>
    <property type="project" value="UniProtKB-UniRule"/>
</dbReference>
<dbReference type="CDD" id="cd02163">
    <property type="entry name" value="PPAT"/>
    <property type="match status" value="1"/>
</dbReference>
<dbReference type="Gene3D" id="3.40.50.620">
    <property type="entry name" value="HUPs"/>
    <property type="match status" value="1"/>
</dbReference>
<dbReference type="HAMAP" id="MF_00151">
    <property type="entry name" value="PPAT_bact"/>
    <property type="match status" value="1"/>
</dbReference>
<dbReference type="InterPro" id="IPR004821">
    <property type="entry name" value="Cyt_trans-like"/>
</dbReference>
<dbReference type="InterPro" id="IPR001980">
    <property type="entry name" value="PPAT"/>
</dbReference>
<dbReference type="InterPro" id="IPR014729">
    <property type="entry name" value="Rossmann-like_a/b/a_fold"/>
</dbReference>
<dbReference type="NCBIfam" id="TIGR01510">
    <property type="entry name" value="coaD_prev_kdtB"/>
    <property type="match status" value="1"/>
</dbReference>
<dbReference type="NCBIfam" id="TIGR00125">
    <property type="entry name" value="cyt_tran_rel"/>
    <property type="match status" value="1"/>
</dbReference>
<dbReference type="PANTHER" id="PTHR21342">
    <property type="entry name" value="PHOSPHOPANTETHEINE ADENYLYLTRANSFERASE"/>
    <property type="match status" value="1"/>
</dbReference>
<dbReference type="PANTHER" id="PTHR21342:SF1">
    <property type="entry name" value="PHOSPHOPANTETHEINE ADENYLYLTRANSFERASE"/>
    <property type="match status" value="1"/>
</dbReference>
<dbReference type="Pfam" id="PF01467">
    <property type="entry name" value="CTP_transf_like"/>
    <property type="match status" value="1"/>
</dbReference>
<dbReference type="PRINTS" id="PR01020">
    <property type="entry name" value="LPSBIOSNTHSS"/>
</dbReference>
<dbReference type="SUPFAM" id="SSF52374">
    <property type="entry name" value="Nucleotidylyl transferase"/>
    <property type="match status" value="1"/>
</dbReference>
<evidence type="ECO:0000255" key="1">
    <source>
        <dbReference type="HAMAP-Rule" id="MF_00151"/>
    </source>
</evidence>
<gene>
    <name evidence="1" type="primary">coaD</name>
    <name type="ordered locus">RHOS4_15530</name>
    <name type="ORF">RSP_2960</name>
</gene>
<feature type="chain" id="PRO_1000076779" description="Phosphopantetheine adenylyltransferase">
    <location>
        <begin position="1"/>
        <end position="162"/>
    </location>
</feature>
<feature type="binding site" evidence="1">
    <location>
        <begin position="9"/>
        <end position="10"/>
    </location>
    <ligand>
        <name>ATP</name>
        <dbReference type="ChEBI" id="CHEBI:30616"/>
    </ligand>
</feature>
<feature type="binding site" evidence="1">
    <location>
        <position position="9"/>
    </location>
    <ligand>
        <name>substrate</name>
    </ligand>
</feature>
<feature type="binding site" evidence="1">
    <location>
        <position position="17"/>
    </location>
    <ligand>
        <name>ATP</name>
        <dbReference type="ChEBI" id="CHEBI:30616"/>
    </ligand>
</feature>
<feature type="binding site" evidence="1">
    <location>
        <position position="41"/>
    </location>
    <ligand>
        <name>substrate</name>
    </ligand>
</feature>
<feature type="binding site" evidence="1">
    <location>
        <position position="77"/>
    </location>
    <ligand>
        <name>substrate</name>
    </ligand>
</feature>
<feature type="binding site" evidence="1">
    <location>
        <position position="91"/>
    </location>
    <ligand>
        <name>substrate</name>
    </ligand>
</feature>
<feature type="binding site" evidence="1">
    <location>
        <begin position="92"/>
        <end position="94"/>
    </location>
    <ligand>
        <name>ATP</name>
        <dbReference type="ChEBI" id="CHEBI:30616"/>
    </ligand>
</feature>
<feature type="binding site" evidence="1">
    <location>
        <position position="102"/>
    </location>
    <ligand>
        <name>ATP</name>
        <dbReference type="ChEBI" id="CHEBI:30616"/>
    </ligand>
</feature>
<feature type="binding site" evidence="1">
    <location>
        <begin position="127"/>
        <end position="133"/>
    </location>
    <ligand>
        <name>ATP</name>
        <dbReference type="ChEBI" id="CHEBI:30616"/>
    </ligand>
</feature>
<feature type="site" description="Transition state stabilizer" evidence="1">
    <location>
        <position position="17"/>
    </location>
</feature>